<protein>
    <recommendedName>
        <fullName evidence="1">Serine--tRNA ligase</fullName>
        <ecNumber evidence="1">6.1.1.11</ecNumber>
    </recommendedName>
    <alternativeName>
        <fullName evidence="1">Seryl-tRNA synthetase</fullName>
        <shortName evidence="1">SerRS</shortName>
    </alternativeName>
    <alternativeName>
        <fullName evidence="1">Seryl-tRNA(Ser/Sec) synthetase</fullName>
    </alternativeName>
</protein>
<feature type="chain" id="PRO_1000098141" description="Serine--tRNA ligase">
    <location>
        <begin position="1"/>
        <end position="426"/>
    </location>
</feature>
<feature type="binding site" evidence="1">
    <location>
        <begin position="229"/>
        <end position="231"/>
    </location>
    <ligand>
        <name>L-serine</name>
        <dbReference type="ChEBI" id="CHEBI:33384"/>
    </ligand>
</feature>
<feature type="binding site" evidence="1">
    <location>
        <begin position="260"/>
        <end position="262"/>
    </location>
    <ligand>
        <name>ATP</name>
        <dbReference type="ChEBI" id="CHEBI:30616"/>
    </ligand>
</feature>
<feature type="binding site" evidence="1">
    <location>
        <position position="276"/>
    </location>
    <ligand>
        <name>ATP</name>
        <dbReference type="ChEBI" id="CHEBI:30616"/>
    </ligand>
</feature>
<feature type="binding site" evidence="1">
    <location>
        <position position="283"/>
    </location>
    <ligand>
        <name>L-serine</name>
        <dbReference type="ChEBI" id="CHEBI:33384"/>
    </ligand>
</feature>
<feature type="binding site" evidence="1">
    <location>
        <begin position="349"/>
        <end position="352"/>
    </location>
    <ligand>
        <name>ATP</name>
        <dbReference type="ChEBI" id="CHEBI:30616"/>
    </ligand>
</feature>
<feature type="binding site" evidence="1">
    <location>
        <position position="384"/>
    </location>
    <ligand>
        <name>L-serine</name>
        <dbReference type="ChEBI" id="CHEBI:33384"/>
    </ligand>
</feature>
<sequence length="426" mass="48014">MLDYRFIRENVDAVKENVKVRNVHADVDAIVHLYDQRVKLLAELQELQRARNENAQTMKSSLDALARSACVETGRALKDRIAHSERLLVQISDQLLSATQALPNMTHMCTPHGRSDSDNLEIKRCGVPPCFSFSPRDHVELARLLDIVDFEAGKKVSGIKFYYLKREGVLLEQALIMFGLQFLQERGFVPFLTPDIAREGMVCGLGFNPRGSGSNIYRIEGEHRCLVATAEITLGAYHAGEVLEERSLPRLYAGLSHCFRKEAGAAGQFSRGLYRVHQFTKLEMFAYCTPSDSECLHERLRSLEEEIFTALEIPFRVVEVCAGDLGAPAYRKWDLEAWMPGRQGGSWGEVTSASNCTDYQARRLNVRYKDAEGKKHYVHMLNGTALAISRVLIALLENGQDAEGRVRIPQALVPFCGFEYLYPRVL</sequence>
<reference key="1">
    <citation type="journal article" date="2008" name="BMC Microbiol.">
        <title>Complete genome sequence of Treponema pallidum ssp. pallidum strain SS14 determined with oligonucleotide arrays.</title>
        <authorList>
            <person name="Matejkova P."/>
            <person name="Strouhal M."/>
            <person name="Smajs D."/>
            <person name="Norris S.J."/>
            <person name="Palzkill T."/>
            <person name="Petrosino J.F."/>
            <person name="Sodergren E."/>
            <person name="Norton J.E."/>
            <person name="Singh J."/>
            <person name="Richmond T.A."/>
            <person name="Molla M.N."/>
            <person name="Albert T.J."/>
            <person name="Weinstock G.M."/>
        </authorList>
    </citation>
    <scope>NUCLEOTIDE SEQUENCE [LARGE SCALE GENOMIC DNA]</scope>
    <source>
        <strain>SS14</strain>
    </source>
</reference>
<keyword id="KW-0030">Aminoacyl-tRNA synthetase</keyword>
<keyword id="KW-0067">ATP-binding</keyword>
<keyword id="KW-0963">Cytoplasm</keyword>
<keyword id="KW-0436">Ligase</keyword>
<keyword id="KW-0547">Nucleotide-binding</keyword>
<keyword id="KW-0648">Protein biosynthesis</keyword>
<comment type="function">
    <text evidence="1">Catalyzes the attachment of serine to tRNA(Ser). Is also able to aminoacylate tRNA(Sec) with serine, to form the misacylated tRNA L-seryl-tRNA(Sec), which will be further converted into selenocysteinyl-tRNA(Sec).</text>
</comment>
<comment type="catalytic activity">
    <reaction evidence="1">
        <text>tRNA(Ser) + L-serine + ATP = L-seryl-tRNA(Ser) + AMP + diphosphate + H(+)</text>
        <dbReference type="Rhea" id="RHEA:12292"/>
        <dbReference type="Rhea" id="RHEA-COMP:9669"/>
        <dbReference type="Rhea" id="RHEA-COMP:9703"/>
        <dbReference type="ChEBI" id="CHEBI:15378"/>
        <dbReference type="ChEBI" id="CHEBI:30616"/>
        <dbReference type="ChEBI" id="CHEBI:33019"/>
        <dbReference type="ChEBI" id="CHEBI:33384"/>
        <dbReference type="ChEBI" id="CHEBI:78442"/>
        <dbReference type="ChEBI" id="CHEBI:78533"/>
        <dbReference type="ChEBI" id="CHEBI:456215"/>
        <dbReference type="EC" id="6.1.1.11"/>
    </reaction>
</comment>
<comment type="catalytic activity">
    <reaction evidence="1">
        <text>tRNA(Sec) + L-serine + ATP = L-seryl-tRNA(Sec) + AMP + diphosphate + H(+)</text>
        <dbReference type="Rhea" id="RHEA:42580"/>
        <dbReference type="Rhea" id="RHEA-COMP:9742"/>
        <dbReference type="Rhea" id="RHEA-COMP:10128"/>
        <dbReference type="ChEBI" id="CHEBI:15378"/>
        <dbReference type="ChEBI" id="CHEBI:30616"/>
        <dbReference type="ChEBI" id="CHEBI:33019"/>
        <dbReference type="ChEBI" id="CHEBI:33384"/>
        <dbReference type="ChEBI" id="CHEBI:78442"/>
        <dbReference type="ChEBI" id="CHEBI:78533"/>
        <dbReference type="ChEBI" id="CHEBI:456215"/>
        <dbReference type="EC" id="6.1.1.11"/>
    </reaction>
</comment>
<comment type="pathway">
    <text evidence="1">Aminoacyl-tRNA biosynthesis; selenocysteinyl-tRNA(Sec) biosynthesis; L-seryl-tRNA(Sec) from L-serine and tRNA(Sec): step 1/1.</text>
</comment>
<comment type="subunit">
    <text evidence="1">Homodimer. The tRNA molecule binds across the dimer.</text>
</comment>
<comment type="subcellular location">
    <subcellularLocation>
        <location evidence="1">Cytoplasm</location>
    </subcellularLocation>
</comment>
<comment type="domain">
    <text evidence="1">Consists of two distinct domains, a catalytic core and a N-terminal extension that is involved in tRNA binding.</text>
</comment>
<comment type="similarity">
    <text evidence="1">Belongs to the class-II aminoacyl-tRNA synthetase family. Type-1 seryl-tRNA synthetase subfamily.</text>
</comment>
<name>SYS_TREPS</name>
<evidence type="ECO:0000255" key="1">
    <source>
        <dbReference type="HAMAP-Rule" id="MF_00176"/>
    </source>
</evidence>
<proteinExistence type="inferred from homology"/>
<accession>B2S3N6</accession>
<organism>
    <name type="scientific">Treponema pallidum subsp. pallidum (strain SS14)</name>
    <dbReference type="NCBI Taxonomy" id="455434"/>
    <lineage>
        <taxon>Bacteria</taxon>
        <taxon>Pseudomonadati</taxon>
        <taxon>Spirochaetota</taxon>
        <taxon>Spirochaetia</taxon>
        <taxon>Spirochaetales</taxon>
        <taxon>Treponemataceae</taxon>
        <taxon>Treponema</taxon>
    </lineage>
</organism>
<dbReference type="EC" id="6.1.1.11" evidence="1"/>
<dbReference type="EMBL" id="CP000805">
    <property type="protein sequence ID" value="ACD71065.1"/>
    <property type="molecule type" value="Genomic_DNA"/>
</dbReference>
<dbReference type="RefSeq" id="WP_010882092.1">
    <property type="nucleotide sequence ID" value="NC_021508.1"/>
</dbReference>
<dbReference type="SMR" id="B2S3N6"/>
<dbReference type="GeneID" id="93876415"/>
<dbReference type="KEGG" id="tpp:TPASS_0647"/>
<dbReference type="PATRIC" id="fig|455434.6.peg.641"/>
<dbReference type="UniPathway" id="UPA00906">
    <property type="reaction ID" value="UER00895"/>
</dbReference>
<dbReference type="Proteomes" id="UP000001202">
    <property type="component" value="Chromosome"/>
</dbReference>
<dbReference type="GO" id="GO:0005737">
    <property type="term" value="C:cytoplasm"/>
    <property type="evidence" value="ECO:0007669"/>
    <property type="project" value="UniProtKB-SubCell"/>
</dbReference>
<dbReference type="GO" id="GO:0005524">
    <property type="term" value="F:ATP binding"/>
    <property type="evidence" value="ECO:0007669"/>
    <property type="project" value="UniProtKB-UniRule"/>
</dbReference>
<dbReference type="GO" id="GO:0004828">
    <property type="term" value="F:serine-tRNA ligase activity"/>
    <property type="evidence" value="ECO:0007669"/>
    <property type="project" value="UniProtKB-UniRule"/>
</dbReference>
<dbReference type="GO" id="GO:0016260">
    <property type="term" value="P:selenocysteine biosynthetic process"/>
    <property type="evidence" value="ECO:0007669"/>
    <property type="project" value="UniProtKB-UniRule"/>
</dbReference>
<dbReference type="GO" id="GO:0006434">
    <property type="term" value="P:seryl-tRNA aminoacylation"/>
    <property type="evidence" value="ECO:0007669"/>
    <property type="project" value="UniProtKB-UniRule"/>
</dbReference>
<dbReference type="CDD" id="cd00770">
    <property type="entry name" value="SerRS_core"/>
    <property type="match status" value="1"/>
</dbReference>
<dbReference type="Gene3D" id="3.30.930.10">
    <property type="entry name" value="Bira Bifunctional Protein, Domain 2"/>
    <property type="match status" value="1"/>
</dbReference>
<dbReference type="Gene3D" id="1.10.287.40">
    <property type="entry name" value="Serine-tRNA synthetase, tRNA binding domain"/>
    <property type="match status" value="1"/>
</dbReference>
<dbReference type="HAMAP" id="MF_00176">
    <property type="entry name" value="Ser_tRNA_synth_type1"/>
    <property type="match status" value="1"/>
</dbReference>
<dbReference type="InterPro" id="IPR002314">
    <property type="entry name" value="aa-tRNA-synt_IIb"/>
</dbReference>
<dbReference type="InterPro" id="IPR006195">
    <property type="entry name" value="aa-tRNA-synth_II"/>
</dbReference>
<dbReference type="InterPro" id="IPR045864">
    <property type="entry name" value="aa-tRNA-synth_II/BPL/LPL"/>
</dbReference>
<dbReference type="InterPro" id="IPR002317">
    <property type="entry name" value="Ser-tRNA-ligase_type_1"/>
</dbReference>
<dbReference type="InterPro" id="IPR015866">
    <property type="entry name" value="Ser-tRNA-synth_1_N"/>
</dbReference>
<dbReference type="InterPro" id="IPR042103">
    <property type="entry name" value="SerRS_1_N_sf"/>
</dbReference>
<dbReference type="InterPro" id="IPR033729">
    <property type="entry name" value="SerRS_core"/>
</dbReference>
<dbReference type="InterPro" id="IPR010978">
    <property type="entry name" value="tRNA-bd_arm"/>
</dbReference>
<dbReference type="NCBIfam" id="TIGR00414">
    <property type="entry name" value="serS"/>
    <property type="match status" value="1"/>
</dbReference>
<dbReference type="PANTHER" id="PTHR11778">
    <property type="entry name" value="SERYL-TRNA SYNTHETASE"/>
    <property type="match status" value="1"/>
</dbReference>
<dbReference type="Pfam" id="PF02403">
    <property type="entry name" value="Seryl_tRNA_N"/>
    <property type="match status" value="1"/>
</dbReference>
<dbReference type="Pfam" id="PF00587">
    <property type="entry name" value="tRNA-synt_2b"/>
    <property type="match status" value="1"/>
</dbReference>
<dbReference type="PIRSF" id="PIRSF001529">
    <property type="entry name" value="Ser-tRNA-synth_IIa"/>
    <property type="match status" value="1"/>
</dbReference>
<dbReference type="PRINTS" id="PR00981">
    <property type="entry name" value="TRNASYNTHSER"/>
</dbReference>
<dbReference type="SUPFAM" id="SSF55681">
    <property type="entry name" value="Class II aaRS and biotin synthetases"/>
    <property type="match status" value="1"/>
</dbReference>
<dbReference type="SUPFAM" id="SSF46589">
    <property type="entry name" value="tRNA-binding arm"/>
    <property type="match status" value="1"/>
</dbReference>
<dbReference type="PROSITE" id="PS50862">
    <property type="entry name" value="AA_TRNA_LIGASE_II"/>
    <property type="match status" value="1"/>
</dbReference>
<gene>
    <name evidence="1" type="primary">serS</name>
    <name type="ordered locus">TPASS_0647</name>
</gene>